<proteinExistence type="predicted"/>
<keyword id="KW-0175">Coiled coil</keyword>
<keyword id="KW-1185">Reference proteome</keyword>
<evidence type="ECO:0000255" key="1"/>
<evidence type="ECO:0000256" key="2">
    <source>
        <dbReference type="SAM" id="MobiDB-lite"/>
    </source>
</evidence>
<feature type="chain" id="PRO_0000385110" description="Uncharacterized protein ORF90">
    <location>
        <begin position="1"/>
        <end position="294"/>
    </location>
</feature>
<feature type="region of interest" description="Disordered" evidence="2">
    <location>
        <begin position="25"/>
        <end position="59"/>
    </location>
</feature>
<feature type="region of interest" description="Disordered" evidence="2">
    <location>
        <begin position="77"/>
        <end position="141"/>
    </location>
</feature>
<feature type="region of interest" description="Disordered" evidence="2">
    <location>
        <begin position="242"/>
        <end position="294"/>
    </location>
</feature>
<feature type="coiled-coil region" evidence="1">
    <location>
        <begin position="201"/>
        <end position="234"/>
    </location>
</feature>
<feature type="compositionally biased region" description="Acidic residues" evidence="2">
    <location>
        <begin position="86"/>
        <end position="139"/>
    </location>
</feature>
<feature type="compositionally biased region" description="Basic and acidic residues" evidence="2">
    <location>
        <begin position="242"/>
        <end position="259"/>
    </location>
</feature>
<feature type="compositionally biased region" description="Acidic residues" evidence="2">
    <location>
        <begin position="260"/>
        <end position="283"/>
    </location>
</feature>
<dbReference type="EMBL" id="AY509253">
    <property type="protein sequence ID" value="AAS00976.1"/>
    <property type="molecule type" value="Genomic_DNA"/>
</dbReference>
<dbReference type="RefSeq" id="YP_024629.1">
    <property type="nucleotide sequence ID" value="NC_005881.2"/>
</dbReference>
<dbReference type="KEGG" id="vg:2948251"/>
<dbReference type="Proteomes" id="UP000007021">
    <property type="component" value="Segment"/>
</dbReference>
<protein>
    <recommendedName>
        <fullName>Uncharacterized protein ORF90</fullName>
    </recommendedName>
</protein>
<gene>
    <name type="ORF">ORF90</name>
</gene>
<organismHost>
    <name type="scientific">Magallana gigas</name>
    <name type="common">Pacific oyster</name>
    <name type="synonym">Crassostrea gigas</name>
    <dbReference type="NCBI Taxonomy" id="29159"/>
</organismHost>
<organismHost>
    <name type="scientific">Pecten maximus</name>
    <name type="common">King scallop</name>
    <name type="synonym">Pilgrim's clam</name>
    <dbReference type="NCBI Taxonomy" id="6579"/>
</organismHost>
<reference key="1">
    <citation type="journal article" date="2005" name="J. Gen. Virol.">
        <title>A novel class of herpesvirus with bivalve hosts.</title>
        <authorList>
            <person name="Davison A.J."/>
            <person name="Trus B.L."/>
            <person name="Cheng N."/>
            <person name="Steven A.C."/>
            <person name="Watson M.S."/>
            <person name="Cunningham C."/>
            <person name="Le Deuff R.M."/>
            <person name="Renault T."/>
        </authorList>
    </citation>
    <scope>NUCLEOTIDE SEQUENCE [LARGE SCALE GENOMIC DNA]</scope>
</reference>
<name>Y090_OSHVF</name>
<sequence length="294" mass="33912">MDSELVSYLAEQTAEPRLVIDEDEVQVYRPVGQGAKRRINSEESDVSEDGNSKPKRVRRSSVEIIFREIKKNNEKKLKDDFKASDYEELEDDDDDESIEEESDSEFEGESSSDEEESSYDSDSDYDSETEPEDSDDDFEAPVVKIPEDRQVLSAKRRCTRSLGVIVKTVEEVTHENRLKVNSMSVCDLPIDNMADLKVEHIKFYKRNTTFTEEELAEIEEDLLAEVKARYNNMKGDFRRSKTIETTEDDKKAGEVNKYDIDDDFIEKTESDEEEEITEDDSSEQETVVVEPVDE</sequence>
<accession>Q6R7D9</accession>
<organism>
    <name type="scientific">Ostreid herpesvirus 1 (isolate France)</name>
    <name type="common">OsHV-1</name>
    <name type="synonym">Pacific oyster herpesvirus</name>
    <dbReference type="NCBI Taxonomy" id="654903"/>
    <lineage>
        <taxon>Viruses</taxon>
        <taxon>Duplodnaviria</taxon>
        <taxon>Heunggongvirae</taxon>
        <taxon>Peploviricota</taxon>
        <taxon>Herviviricetes</taxon>
        <taxon>Herpesvirales</taxon>
        <taxon>Malacoherpesviridae</taxon>
        <taxon>Ostreavirus</taxon>
        <taxon>Ostreavirus ostreidmalaco1</taxon>
        <taxon>Ostreid herpesvirus 1</taxon>
    </lineage>
</organism>